<feature type="initiator methionine" description="Removed" evidence="1">
    <location>
        <position position="1"/>
    </location>
</feature>
<feature type="chain" id="PRO_0000294378" description="Malate dehydrogenase">
    <location>
        <begin position="2"/>
        <end position="328"/>
    </location>
</feature>
<feature type="active site" description="Proton acceptor" evidence="2">
    <location>
        <position position="188"/>
    </location>
</feature>
<feature type="binding site" evidence="2">
    <location>
        <begin position="12"/>
        <end position="18"/>
    </location>
    <ligand>
        <name>NAD(+)</name>
        <dbReference type="ChEBI" id="CHEBI:57540"/>
    </ligand>
</feature>
<feature type="binding site" evidence="2">
    <location>
        <position position="93"/>
    </location>
    <ligand>
        <name>substrate</name>
    </ligand>
</feature>
<feature type="binding site" evidence="2">
    <location>
        <position position="99"/>
    </location>
    <ligand>
        <name>substrate</name>
    </ligand>
</feature>
<feature type="binding site" evidence="2">
    <location>
        <position position="106"/>
    </location>
    <ligand>
        <name>NAD(+)</name>
        <dbReference type="ChEBI" id="CHEBI:57540"/>
    </ligand>
</feature>
<feature type="binding site" evidence="2">
    <location>
        <position position="113"/>
    </location>
    <ligand>
        <name>NAD(+)</name>
        <dbReference type="ChEBI" id="CHEBI:57540"/>
    </ligand>
</feature>
<feature type="binding site" evidence="2">
    <location>
        <begin position="130"/>
        <end position="132"/>
    </location>
    <ligand>
        <name>NAD(+)</name>
        <dbReference type="ChEBI" id="CHEBI:57540"/>
    </ligand>
</feature>
<feature type="binding site" evidence="2">
    <location>
        <position position="132"/>
    </location>
    <ligand>
        <name>substrate</name>
    </ligand>
</feature>
<feature type="binding site" evidence="2">
    <location>
        <position position="163"/>
    </location>
    <ligand>
        <name>substrate</name>
    </ligand>
</feature>
<sequence length="328" mass="35115">MAKPAKRVAVTGAAGQIAYSLLFRIANGDLLGKDQPVILQLLDLPQAQAAVKGVVMELDDCAFPLLAGVVITDDPKVAFKDADVALLVGARPRSKGMERKDLLSANAEIFTVQGAALNEVASRDVKVLVVGNPANTNAYIAMKSAPDLPKKNFTAMLRLDHNRALSQLAAKSGKPVASIEKLAVWGNHSPTMYPDFRFATAEGESLLKLINDDVWNRDTFIPTVGKRGAAIIEARGLSSAASAANAAIDHVRDWVLGTNGKWVTMGIPSDGSYGIPEDIIYGVPVVCENGEYKRVEGLEIDAFSREKMDGTLAELLEERDGVAHLLKN</sequence>
<dbReference type="EC" id="1.1.1.37" evidence="2"/>
<dbReference type="EMBL" id="CP000441">
    <property type="protein sequence ID" value="ABI88864.1"/>
    <property type="molecule type" value="Genomic_DNA"/>
</dbReference>
<dbReference type="RefSeq" id="WP_006754984.1">
    <property type="nucleotide sequence ID" value="NZ_CP009799.1"/>
</dbReference>
<dbReference type="SMR" id="Q0BAF9"/>
<dbReference type="KEGG" id="bam:Bamb_3309"/>
<dbReference type="PATRIC" id="fig|339670.21.peg.3516"/>
<dbReference type="eggNOG" id="COG0039">
    <property type="taxonomic scope" value="Bacteria"/>
</dbReference>
<dbReference type="Proteomes" id="UP000000662">
    <property type="component" value="Chromosome 2"/>
</dbReference>
<dbReference type="GO" id="GO:0030060">
    <property type="term" value="F:L-malate dehydrogenase (NAD+) activity"/>
    <property type="evidence" value="ECO:0007669"/>
    <property type="project" value="UniProtKB-UniRule"/>
</dbReference>
<dbReference type="GO" id="GO:0006108">
    <property type="term" value="P:malate metabolic process"/>
    <property type="evidence" value="ECO:0007669"/>
    <property type="project" value="InterPro"/>
</dbReference>
<dbReference type="GO" id="GO:0006099">
    <property type="term" value="P:tricarboxylic acid cycle"/>
    <property type="evidence" value="ECO:0007669"/>
    <property type="project" value="UniProtKB-UniRule"/>
</dbReference>
<dbReference type="CDD" id="cd01338">
    <property type="entry name" value="MDH_chloroplast-like"/>
    <property type="match status" value="1"/>
</dbReference>
<dbReference type="FunFam" id="3.40.50.720:FF:000010">
    <property type="entry name" value="Malate dehydrogenase"/>
    <property type="match status" value="1"/>
</dbReference>
<dbReference type="FunFam" id="3.90.110.10:FF:000002">
    <property type="entry name" value="Malate dehydrogenase"/>
    <property type="match status" value="1"/>
</dbReference>
<dbReference type="Gene3D" id="3.90.110.10">
    <property type="entry name" value="Lactate dehydrogenase/glycoside hydrolase, family 4, C-terminal"/>
    <property type="match status" value="1"/>
</dbReference>
<dbReference type="Gene3D" id="3.40.50.720">
    <property type="entry name" value="NAD(P)-binding Rossmann-like Domain"/>
    <property type="match status" value="1"/>
</dbReference>
<dbReference type="HAMAP" id="MF_01517">
    <property type="entry name" value="Malate_dehydrog_2"/>
    <property type="match status" value="1"/>
</dbReference>
<dbReference type="InterPro" id="IPR001557">
    <property type="entry name" value="L-lactate/malate_DH"/>
</dbReference>
<dbReference type="InterPro" id="IPR022383">
    <property type="entry name" value="Lactate/malate_DH_C"/>
</dbReference>
<dbReference type="InterPro" id="IPR001236">
    <property type="entry name" value="Lactate/malate_DH_N"/>
</dbReference>
<dbReference type="InterPro" id="IPR015955">
    <property type="entry name" value="Lactate_DH/Glyco_Ohase_4_C"/>
</dbReference>
<dbReference type="InterPro" id="IPR010945">
    <property type="entry name" value="Malate_DH_type2"/>
</dbReference>
<dbReference type="InterPro" id="IPR036291">
    <property type="entry name" value="NAD(P)-bd_dom_sf"/>
</dbReference>
<dbReference type="NCBIfam" id="TIGR01759">
    <property type="entry name" value="MalateDH-SF1"/>
    <property type="match status" value="1"/>
</dbReference>
<dbReference type="NCBIfam" id="NF003916">
    <property type="entry name" value="PRK05442.1"/>
    <property type="match status" value="1"/>
</dbReference>
<dbReference type="PANTHER" id="PTHR23382">
    <property type="entry name" value="MALATE DEHYDROGENASE"/>
    <property type="match status" value="1"/>
</dbReference>
<dbReference type="Pfam" id="PF02866">
    <property type="entry name" value="Ldh_1_C"/>
    <property type="match status" value="1"/>
</dbReference>
<dbReference type="Pfam" id="PF00056">
    <property type="entry name" value="Ldh_1_N"/>
    <property type="match status" value="1"/>
</dbReference>
<dbReference type="PIRSF" id="PIRSF000102">
    <property type="entry name" value="Lac_mal_DH"/>
    <property type="match status" value="1"/>
</dbReference>
<dbReference type="SUPFAM" id="SSF56327">
    <property type="entry name" value="LDH C-terminal domain-like"/>
    <property type="match status" value="1"/>
</dbReference>
<dbReference type="SUPFAM" id="SSF51735">
    <property type="entry name" value="NAD(P)-binding Rossmann-fold domains"/>
    <property type="match status" value="1"/>
</dbReference>
<protein>
    <recommendedName>
        <fullName evidence="2">Malate dehydrogenase</fullName>
        <ecNumber evidence="2">1.1.1.37</ecNumber>
    </recommendedName>
</protein>
<keyword id="KW-0520">NAD</keyword>
<keyword id="KW-0560">Oxidoreductase</keyword>
<keyword id="KW-0816">Tricarboxylic acid cycle</keyword>
<evidence type="ECO:0000250" key="1"/>
<evidence type="ECO:0000255" key="2">
    <source>
        <dbReference type="HAMAP-Rule" id="MF_01517"/>
    </source>
</evidence>
<name>MDH_BURCM</name>
<reference key="1">
    <citation type="submission" date="2006-08" db="EMBL/GenBank/DDBJ databases">
        <title>Complete sequence of chromosome 2 of Burkholderia cepacia AMMD.</title>
        <authorList>
            <person name="Copeland A."/>
            <person name="Lucas S."/>
            <person name="Lapidus A."/>
            <person name="Barry K."/>
            <person name="Detter J.C."/>
            <person name="Glavina del Rio T."/>
            <person name="Hammon N."/>
            <person name="Israni S."/>
            <person name="Pitluck S."/>
            <person name="Bruce D."/>
            <person name="Chain P."/>
            <person name="Malfatti S."/>
            <person name="Shin M."/>
            <person name="Vergez L."/>
            <person name="Schmutz J."/>
            <person name="Larimer F."/>
            <person name="Land M."/>
            <person name="Hauser L."/>
            <person name="Kyrpides N."/>
            <person name="Kim E."/>
            <person name="Parke J."/>
            <person name="Coenye T."/>
            <person name="Konstantinidis K."/>
            <person name="Ramette A."/>
            <person name="Tiedje J."/>
            <person name="Richardson P."/>
        </authorList>
    </citation>
    <scope>NUCLEOTIDE SEQUENCE [LARGE SCALE GENOMIC DNA]</scope>
    <source>
        <strain>ATCC BAA-244 / DSM 16087 / CCUG 44356 / LMG 19182 / AMMD</strain>
    </source>
</reference>
<accession>Q0BAF9</accession>
<comment type="function">
    <text evidence="2">Catalyzes the reversible oxidation of malate to oxaloacetate.</text>
</comment>
<comment type="catalytic activity">
    <reaction evidence="2">
        <text>(S)-malate + NAD(+) = oxaloacetate + NADH + H(+)</text>
        <dbReference type="Rhea" id="RHEA:21432"/>
        <dbReference type="ChEBI" id="CHEBI:15378"/>
        <dbReference type="ChEBI" id="CHEBI:15589"/>
        <dbReference type="ChEBI" id="CHEBI:16452"/>
        <dbReference type="ChEBI" id="CHEBI:57540"/>
        <dbReference type="ChEBI" id="CHEBI:57945"/>
        <dbReference type="EC" id="1.1.1.37"/>
    </reaction>
</comment>
<comment type="similarity">
    <text evidence="2">Belongs to the LDH/MDH superfamily. MDH type 2 family.</text>
</comment>
<organism>
    <name type="scientific">Burkholderia ambifaria (strain ATCC BAA-244 / DSM 16087 / CCUG 44356 / LMG 19182 / AMMD)</name>
    <name type="common">Burkholderia cepacia (strain AMMD)</name>
    <dbReference type="NCBI Taxonomy" id="339670"/>
    <lineage>
        <taxon>Bacteria</taxon>
        <taxon>Pseudomonadati</taxon>
        <taxon>Pseudomonadota</taxon>
        <taxon>Betaproteobacteria</taxon>
        <taxon>Burkholderiales</taxon>
        <taxon>Burkholderiaceae</taxon>
        <taxon>Burkholderia</taxon>
        <taxon>Burkholderia cepacia complex</taxon>
    </lineage>
</organism>
<proteinExistence type="inferred from homology"/>
<gene>
    <name evidence="2" type="primary">mdh</name>
    <name type="ordered locus">Bamb_3309</name>
</gene>